<feature type="chain" id="PRO_0000252906" description="Fluoride-specific ion channel FluC">
    <location>
        <begin position="1"/>
        <end position="126"/>
    </location>
</feature>
<feature type="transmembrane region" description="Helical" evidence="1">
    <location>
        <begin position="1"/>
        <end position="21"/>
    </location>
</feature>
<feature type="transmembrane region" description="Helical" evidence="1">
    <location>
        <begin position="33"/>
        <end position="53"/>
    </location>
</feature>
<feature type="transmembrane region" description="Helical" evidence="1">
    <location>
        <begin position="72"/>
        <end position="92"/>
    </location>
</feature>
<feature type="transmembrane region" description="Helical" evidence="1">
    <location>
        <begin position="97"/>
        <end position="117"/>
    </location>
</feature>
<feature type="binding site" evidence="1">
    <location>
        <position position="76"/>
    </location>
    <ligand>
        <name>Na(+)</name>
        <dbReference type="ChEBI" id="CHEBI:29101"/>
        <note>structural</note>
    </ligand>
</feature>
<feature type="binding site" evidence="1">
    <location>
        <position position="79"/>
    </location>
    <ligand>
        <name>Na(+)</name>
        <dbReference type="ChEBI" id="CHEBI:29101"/>
        <note>structural</note>
    </ligand>
</feature>
<organism>
    <name type="scientific">Novosphingobium aromaticivorans (strain ATCC 700278 / DSM 12444 / CCUG 56034 / CIP 105152 / NBRC 16084 / F199)</name>
    <dbReference type="NCBI Taxonomy" id="279238"/>
    <lineage>
        <taxon>Bacteria</taxon>
        <taxon>Pseudomonadati</taxon>
        <taxon>Pseudomonadota</taxon>
        <taxon>Alphaproteobacteria</taxon>
        <taxon>Sphingomonadales</taxon>
        <taxon>Sphingomonadaceae</taxon>
        <taxon>Novosphingobium</taxon>
    </lineage>
</organism>
<comment type="function">
    <text evidence="1">Fluoride-specific ion channel. Important for reducing fluoride concentration in the cell, thus reducing its toxicity.</text>
</comment>
<comment type="catalytic activity">
    <reaction evidence="1">
        <text>fluoride(in) = fluoride(out)</text>
        <dbReference type="Rhea" id="RHEA:76159"/>
        <dbReference type="ChEBI" id="CHEBI:17051"/>
    </reaction>
    <physiologicalReaction direction="left-to-right" evidence="1">
        <dbReference type="Rhea" id="RHEA:76160"/>
    </physiologicalReaction>
</comment>
<comment type="activity regulation">
    <text evidence="1">Na(+) is not transported, but it plays an essential structural role and its presence is essential for fluoride channel function.</text>
</comment>
<comment type="subcellular location">
    <subcellularLocation>
        <location evidence="1">Cell inner membrane</location>
        <topology evidence="1">Multi-pass membrane protein</topology>
    </subcellularLocation>
</comment>
<comment type="similarity">
    <text evidence="1">Belongs to the fluoride channel Fluc/FEX (TC 1.A.43) family.</text>
</comment>
<comment type="sequence caution" evidence="2">
    <conflict type="erroneous initiation">
        <sequence resource="EMBL-CDS" id="ABD27272"/>
    </conflict>
</comment>
<reference key="1">
    <citation type="submission" date="2006-01" db="EMBL/GenBank/DDBJ databases">
        <title>Complete sequence of Novosphingobium aromaticivorans DSM 12444.</title>
        <authorList>
            <consortium name="US DOE Joint Genome Institute"/>
            <person name="Copeland A."/>
            <person name="Lucas S."/>
            <person name="Lapidus A."/>
            <person name="Barry K."/>
            <person name="Detter J.C."/>
            <person name="Glavina T."/>
            <person name="Hammon N."/>
            <person name="Israni S."/>
            <person name="Pitluck S."/>
            <person name="Chain P."/>
            <person name="Malfatti S."/>
            <person name="Shin M."/>
            <person name="Vergez L."/>
            <person name="Schmutz J."/>
            <person name="Larimer F."/>
            <person name="Land M."/>
            <person name="Kyrpides N."/>
            <person name="Ivanova N."/>
            <person name="Fredrickson J."/>
            <person name="Balkwill D."/>
            <person name="Romine M.F."/>
            <person name="Richardson P."/>
        </authorList>
    </citation>
    <scope>NUCLEOTIDE SEQUENCE [LARGE SCALE GENOMIC DNA]</scope>
    <source>
        <strain>ATCC 700278 / DSM 12444 / CCUG 56034 / CIP 105152 / NBRC 16084 / F199</strain>
    </source>
</reference>
<name>FLUC_NOVAD</name>
<sequence>MTATAFVAIGGGIGAVLRFHAGRLATAIAGPNAVFPWGTFAINVVGSLLMGVLAGWLARSGGGESLRLMLGVGVLGGFTTFSAFSLETALLVQRGTIGLAALYAAGSVVAGVTGLFLGLSIMRGVA</sequence>
<accession>Q2G4F1</accession>
<evidence type="ECO:0000255" key="1">
    <source>
        <dbReference type="HAMAP-Rule" id="MF_00454"/>
    </source>
</evidence>
<evidence type="ECO:0000305" key="2"/>
<proteinExistence type="inferred from homology"/>
<protein>
    <recommendedName>
        <fullName evidence="1">Fluoride-specific ion channel FluC</fullName>
    </recommendedName>
</protein>
<dbReference type="EMBL" id="CP000248">
    <property type="protein sequence ID" value="ABD27272.1"/>
    <property type="status" value="ALT_INIT"/>
    <property type="molecule type" value="Genomic_DNA"/>
</dbReference>
<dbReference type="RefSeq" id="WP_011446476.1">
    <property type="nucleotide sequence ID" value="NC_007794.1"/>
</dbReference>
<dbReference type="SMR" id="Q2G4F1"/>
<dbReference type="STRING" id="279238.Saro_2836"/>
<dbReference type="KEGG" id="nar:Saro_2836"/>
<dbReference type="eggNOG" id="COG0239">
    <property type="taxonomic scope" value="Bacteria"/>
</dbReference>
<dbReference type="HOGENOM" id="CLU_114342_2_3_5"/>
<dbReference type="Proteomes" id="UP000009134">
    <property type="component" value="Chromosome"/>
</dbReference>
<dbReference type="GO" id="GO:0005886">
    <property type="term" value="C:plasma membrane"/>
    <property type="evidence" value="ECO:0007669"/>
    <property type="project" value="UniProtKB-SubCell"/>
</dbReference>
<dbReference type="GO" id="GO:0062054">
    <property type="term" value="F:fluoride channel activity"/>
    <property type="evidence" value="ECO:0007669"/>
    <property type="project" value="UniProtKB-UniRule"/>
</dbReference>
<dbReference type="GO" id="GO:0046872">
    <property type="term" value="F:metal ion binding"/>
    <property type="evidence" value="ECO:0007669"/>
    <property type="project" value="UniProtKB-KW"/>
</dbReference>
<dbReference type="GO" id="GO:0140114">
    <property type="term" value="P:cellular detoxification of fluoride"/>
    <property type="evidence" value="ECO:0007669"/>
    <property type="project" value="UniProtKB-UniRule"/>
</dbReference>
<dbReference type="HAMAP" id="MF_00454">
    <property type="entry name" value="FluC"/>
    <property type="match status" value="1"/>
</dbReference>
<dbReference type="InterPro" id="IPR003691">
    <property type="entry name" value="FluC"/>
</dbReference>
<dbReference type="NCBIfam" id="TIGR00494">
    <property type="entry name" value="crcB"/>
    <property type="match status" value="1"/>
</dbReference>
<dbReference type="NCBIfam" id="NF010791">
    <property type="entry name" value="PRK14195.1"/>
    <property type="match status" value="1"/>
</dbReference>
<dbReference type="PANTHER" id="PTHR28259">
    <property type="entry name" value="FLUORIDE EXPORT PROTEIN 1-RELATED"/>
    <property type="match status" value="1"/>
</dbReference>
<dbReference type="PANTHER" id="PTHR28259:SF1">
    <property type="entry name" value="FLUORIDE EXPORT PROTEIN 1-RELATED"/>
    <property type="match status" value="1"/>
</dbReference>
<dbReference type="Pfam" id="PF02537">
    <property type="entry name" value="CRCB"/>
    <property type="match status" value="1"/>
</dbReference>
<keyword id="KW-0997">Cell inner membrane</keyword>
<keyword id="KW-1003">Cell membrane</keyword>
<keyword id="KW-0407">Ion channel</keyword>
<keyword id="KW-0406">Ion transport</keyword>
<keyword id="KW-0472">Membrane</keyword>
<keyword id="KW-0479">Metal-binding</keyword>
<keyword id="KW-1185">Reference proteome</keyword>
<keyword id="KW-0915">Sodium</keyword>
<keyword id="KW-0812">Transmembrane</keyword>
<keyword id="KW-1133">Transmembrane helix</keyword>
<keyword id="KW-0813">Transport</keyword>
<gene>
    <name evidence="1" type="primary">fluC</name>
    <name evidence="1" type="synonym">crcB</name>
    <name type="ordered locus">Saro_2836</name>
</gene>